<feature type="signal peptide" evidence="2">
    <location>
        <begin position="1"/>
        <end position="29"/>
    </location>
</feature>
<feature type="chain" id="PRO_0000015058" description="Neuronal cell adhesion molecule">
    <location>
        <begin position="30"/>
        <end position="1256"/>
    </location>
</feature>
<feature type="topological domain" description="Extracellular" evidence="2">
    <location>
        <begin position="30"/>
        <end position="1119"/>
    </location>
</feature>
<feature type="transmembrane region" description="Helical" evidence="2">
    <location>
        <begin position="1120"/>
        <end position="1142"/>
    </location>
</feature>
<feature type="topological domain" description="Cytoplasmic" evidence="2">
    <location>
        <begin position="1143"/>
        <end position="1256"/>
    </location>
</feature>
<feature type="domain" description="Ig-like C2-type 1">
    <location>
        <begin position="40"/>
        <end position="128"/>
    </location>
</feature>
<feature type="domain" description="Ig-like C2-type 2">
    <location>
        <begin position="135"/>
        <end position="229"/>
    </location>
</feature>
<feature type="domain" description="Ig-like C2-type 3">
    <location>
        <begin position="261"/>
        <end position="350"/>
    </location>
</feature>
<feature type="domain" description="Ig-like C2-type 4">
    <location>
        <begin position="355"/>
        <end position="442"/>
    </location>
</feature>
<feature type="domain" description="Ig-like C2-type 5">
    <location>
        <begin position="448"/>
        <end position="535"/>
    </location>
</feature>
<feature type="domain" description="Ig-like C2-type 6">
    <location>
        <begin position="539"/>
        <end position="626"/>
    </location>
</feature>
<feature type="domain" description="Fibronectin type-III 1" evidence="4">
    <location>
        <begin position="643"/>
        <end position="738"/>
    </location>
</feature>
<feature type="domain" description="Fibronectin type-III 2" evidence="4">
    <location>
        <begin position="740"/>
        <end position="837"/>
    </location>
</feature>
<feature type="domain" description="Fibronectin type-III 3" evidence="4">
    <location>
        <begin position="842"/>
        <end position="944"/>
    </location>
</feature>
<feature type="domain" description="Fibronectin type-III 4" evidence="4">
    <location>
        <begin position="948"/>
        <end position="1045"/>
    </location>
</feature>
<feature type="region of interest" description="Disordered" evidence="5">
    <location>
        <begin position="1151"/>
        <end position="1256"/>
    </location>
</feature>
<feature type="compositionally biased region" description="Basic and acidic residues" evidence="5">
    <location>
        <begin position="1151"/>
        <end position="1171"/>
    </location>
</feature>
<feature type="compositionally biased region" description="Basic and acidic residues" evidence="5">
    <location>
        <begin position="1193"/>
        <end position="1202"/>
    </location>
</feature>
<feature type="compositionally biased region" description="Polar residues" evidence="5">
    <location>
        <begin position="1240"/>
        <end position="1256"/>
    </location>
</feature>
<feature type="modified residue" description="Phosphothreonine" evidence="16">
    <location>
        <position position="1173"/>
    </location>
</feature>
<feature type="modified residue" description="Phosphotyrosine" evidence="16">
    <location>
        <position position="1177"/>
    </location>
</feature>
<feature type="modified residue" description="Phosphoserine" evidence="16">
    <location>
        <position position="1178"/>
    </location>
</feature>
<feature type="modified residue" description="Phosphoserine" evidence="16">
    <location>
        <position position="1203"/>
    </location>
</feature>
<feature type="modified residue" description="Phosphoserine" evidence="16">
    <location>
        <position position="1206"/>
    </location>
</feature>
<feature type="modified residue" description="Phosphoserine" evidence="1">
    <location>
        <position position="1223"/>
    </location>
</feature>
<feature type="modified residue" description="Phosphoserine" evidence="16">
    <location>
        <position position="1242"/>
    </location>
</feature>
<feature type="modified residue" description="Phosphoserine" evidence="16">
    <location>
        <position position="1243"/>
    </location>
</feature>
<feature type="modified residue" description="Phosphoserine" evidence="16">
    <location>
        <position position="1247"/>
    </location>
</feature>
<feature type="glycosylation site" description="N-linked (GlcNAc...) asparagine" evidence="2">
    <location>
        <position position="77"/>
    </location>
</feature>
<feature type="glycosylation site" description="N-linked (GlcNAc...) asparagine" evidence="2">
    <location>
        <position position="217"/>
    </location>
</feature>
<feature type="glycosylation site" description="N-linked (GlcNAc...) asparagine" evidence="2">
    <location>
        <position position="239"/>
    </location>
</feature>
<feature type="glycosylation site" description="N-linked (GlcNAc...) asparagine" evidence="2">
    <location>
        <position position="245"/>
    </location>
</feature>
<feature type="glycosylation site" description="N-linked (GlcNAc...) asparagine" evidence="2">
    <location>
        <position position="270"/>
    </location>
</feature>
<feature type="glycosylation site" description="N-linked (GlcNAc...) asparagine" evidence="2">
    <location>
        <position position="308"/>
    </location>
</feature>
<feature type="glycosylation site" description="N-linked (GlcNAc...) asparagine" evidence="2">
    <location>
        <position position="371"/>
    </location>
</feature>
<feature type="glycosylation site" description="N-linked (GlcNAc...) asparagine" evidence="2">
    <location>
        <position position="427"/>
    </location>
</feature>
<feature type="glycosylation site" description="N-linked (GlcNAc...) asparagine" evidence="2">
    <location>
        <position position="501"/>
    </location>
</feature>
<feature type="glycosylation site" description="N-linked (GlcNAc...) asparagine" evidence="2">
    <location>
        <position position="613"/>
    </location>
</feature>
<feature type="glycosylation site" description="N-linked (GlcNAc...) asparagine" evidence="2">
    <location>
        <position position="710"/>
    </location>
</feature>
<feature type="glycosylation site" description="N-linked (GlcNAc...) asparagine" evidence="2">
    <location>
        <position position="796"/>
    </location>
</feature>
<feature type="glycosylation site" description="N-linked (GlcNAc...) asparagine" evidence="2">
    <location>
        <position position="852"/>
    </location>
</feature>
<feature type="glycosylation site" description="N-linked (GlcNAc...) asparagine" evidence="2">
    <location>
        <position position="987"/>
    </location>
</feature>
<feature type="glycosylation site" description="N-linked (GlcNAc...) asparagine" evidence="2">
    <location>
        <position position="1003"/>
    </location>
</feature>
<feature type="glycosylation site" description="N-linked (GlcNAc...) asparagine" evidence="2">
    <location>
        <position position="1013"/>
    </location>
</feature>
<feature type="glycosylation site" description="N-linked (GlcNAc...) asparagine" evidence="2">
    <location>
        <position position="1067"/>
    </location>
</feature>
<feature type="disulfide bond" evidence="3">
    <location>
        <begin position="62"/>
        <end position="117"/>
    </location>
</feature>
<feature type="disulfide bond" evidence="3">
    <location>
        <begin position="161"/>
        <end position="212"/>
    </location>
</feature>
<feature type="disulfide bond" evidence="3">
    <location>
        <begin position="286"/>
        <end position="334"/>
    </location>
</feature>
<feature type="disulfide bond" evidence="3">
    <location>
        <begin position="376"/>
        <end position="426"/>
    </location>
</feature>
<feature type="disulfide bond" evidence="3">
    <location>
        <begin position="470"/>
        <end position="519"/>
    </location>
</feature>
<feature type="disulfide bond" evidence="3">
    <location>
        <begin position="561"/>
        <end position="610"/>
    </location>
</feature>
<feature type="splice variant" id="VSP_008921" description="In isoform 5." evidence="13">
    <original>D</original>
    <variation>DPKLLHD</variation>
    <location>
        <position position="35"/>
    </location>
</feature>
<feature type="splice variant" id="VSP_008922" description="In isoform 5." evidence="13">
    <original>VDELNDTIAANLSDTEFYGA</original>
    <variation>GKSSASGLSFNGVYLCGSNY</variation>
    <location>
        <begin position="235"/>
        <end position="254"/>
    </location>
</feature>
<feature type="splice variant" id="VSP_008923" description="In isoform 4." evidence="13">
    <original>AKSSKE</original>
    <variation>GELQWL</variation>
    <location>
        <begin position="254"/>
        <end position="259"/>
    </location>
</feature>
<feature type="splice variant" id="VSP_008924" description="In isoform 5." evidence="13">
    <location>
        <begin position="255"/>
        <end position="1256"/>
    </location>
</feature>
<feature type="splice variant" id="VSP_008925" description="In isoform 4." evidence="13">
    <location>
        <begin position="260"/>
        <end position="1256"/>
    </location>
</feature>
<feature type="splice variant" id="VSP_008926" description="In isoform 2." evidence="12">
    <location>
        <begin position="629"/>
        <end position="638"/>
    </location>
</feature>
<feature type="splice variant" id="VSP_008927" description="In isoform 2." evidence="12">
    <original>AGIPPPDVGAGKGKEEWRKEIVNGSRSFFGLKGLMPGTAYKVRVGAEGDSGFVSSEDVFETGP</original>
    <variation>GKK</variation>
    <location>
        <begin position="1045"/>
        <end position="1107"/>
    </location>
</feature>
<feature type="splice variant" id="VSP_008930" description="In isoform 3." evidence="13">
    <original>Y</original>
    <variation>YRSFE</variation>
    <location>
        <position position="1177"/>
    </location>
</feature>
<reference key="1">
    <citation type="submission" date="2003-02" db="EMBL/GenBank/DDBJ databases">
        <title>Expression patterns of L1-family cell recognition molecules L1, CHL1, NrCAM, and neurofascin in the mouse brain.</title>
        <authorList>
            <person name="Dirks P."/>
            <person name="Montag-Sallaz M."/>
            <person name="Montag D."/>
        </authorList>
    </citation>
    <scope>NUCLEOTIDE SEQUENCE [MRNA] (ISOFORM 1)</scope>
    <source>
        <strain>Swiss Webster</strain>
        <tissue>Brain</tissue>
    </source>
</reference>
<reference key="2">
    <citation type="journal article" date="2003" name="DNA Res.">
        <title>Prediction of the coding sequences of mouse homologues of KIAA gene: II. The complete nucleotide sequences of 400 mouse KIAA-homologous cDNAs identified by screening of terminal sequences of cDNA clones randomly sampled from size-fractionated libraries.</title>
        <authorList>
            <person name="Okazaki N."/>
            <person name="Kikuno R."/>
            <person name="Ohara R."/>
            <person name="Inamoto S."/>
            <person name="Aizawa H."/>
            <person name="Yuasa S."/>
            <person name="Nakajima D."/>
            <person name="Nagase T."/>
            <person name="Ohara O."/>
            <person name="Koga H."/>
        </authorList>
    </citation>
    <scope>NUCLEOTIDE SEQUENCE [LARGE SCALE MRNA] (ISOFORM 2)</scope>
    <source>
        <tissue>Brain</tissue>
    </source>
</reference>
<reference key="3">
    <citation type="journal article" date="2005" name="Science">
        <title>The transcriptional landscape of the mammalian genome.</title>
        <authorList>
            <person name="Carninci P."/>
            <person name="Kasukawa T."/>
            <person name="Katayama S."/>
            <person name="Gough J."/>
            <person name="Frith M.C."/>
            <person name="Maeda N."/>
            <person name="Oyama R."/>
            <person name="Ravasi T."/>
            <person name="Lenhard B."/>
            <person name="Wells C."/>
            <person name="Kodzius R."/>
            <person name="Shimokawa K."/>
            <person name="Bajic V.B."/>
            <person name="Brenner S.E."/>
            <person name="Batalov S."/>
            <person name="Forrest A.R."/>
            <person name="Zavolan M."/>
            <person name="Davis M.J."/>
            <person name="Wilming L.G."/>
            <person name="Aidinis V."/>
            <person name="Allen J.E."/>
            <person name="Ambesi-Impiombato A."/>
            <person name="Apweiler R."/>
            <person name="Aturaliya R.N."/>
            <person name="Bailey T.L."/>
            <person name="Bansal M."/>
            <person name="Baxter L."/>
            <person name="Beisel K.W."/>
            <person name="Bersano T."/>
            <person name="Bono H."/>
            <person name="Chalk A.M."/>
            <person name="Chiu K.P."/>
            <person name="Choudhary V."/>
            <person name="Christoffels A."/>
            <person name="Clutterbuck D.R."/>
            <person name="Crowe M.L."/>
            <person name="Dalla E."/>
            <person name="Dalrymple B.P."/>
            <person name="de Bono B."/>
            <person name="Della Gatta G."/>
            <person name="di Bernardo D."/>
            <person name="Down T."/>
            <person name="Engstrom P."/>
            <person name="Fagiolini M."/>
            <person name="Faulkner G."/>
            <person name="Fletcher C.F."/>
            <person name="Fukushima T."/>
            <person name="Furuno M."/>
            <person name="Futaki S."/>
            <person name="Gariboldi M."/>
            <person name="Georgii-Hemming P."/>
            <person name="Gingeras T.R."/>
            <person name="Gojobori T."/>
            <person name="Green R.E."/>
            <person name="Gustincich S."/>
            <person name="Harbers M."/>
            <person name="Hayashi Y."/>
            <person name="Hensch T.K."/>
            <person name="Hirokawa N."/>
            <person name="Hill D."/>
            <person name="Huminiecki L."/>
            <person name="Iacono M."/>
            <person name="Ikeo K."/>
            <person name="Iwama A."/>
            <person name="Ishikawa T."/>
            <person name="Jakt M."/>
            <person name="Kanapin A."/>
            <person name="Katoh M."/>
            <person name="Kawasawa Y."/>
            <person name="Kelso J."/>
            <person name="Kitamura H."/>
            <person name="Kitano H."/>
            <person name="Kollias G."/>
            <person name="Krishnan S.P."/>
            <person name="Kruger A."/>
            <person name="Kummerfeld S.K."/>
            <person name="Kurochkin I.V."/>
            <person name="Lareau L.F."/>
            <person name="Lazarevic D."/>
            <person name="Lipovich L."/>
            <person name="Liu J."/>
            <person name="Liuni S."/>
            <person name="McWilliam S."/>
            <person name="Madan Babu M."/>
            <person name="Madera M."/>
            <person name="Marchionni L."/>
            <person name="Matsuda H."/>
            <person name="Matsuzawa S."/>
            <person name="Miki H."/>
            <person name="Mignone F."/>
            <person name="Miyake S."/>
            <person name="Morris K."/>
            <person name="Mottagui-Tabar S."/>
            <person name="Mulder N."/>
            <person name="Nakano N."/>
            <person name="Nakauchi H."/>
            <person name="Ng P."/>
            <person name="Nilsson R."/>
            <person name="Nishiguchi S."/>
            <person name="Nishikawa S."/>
            <person name="Nori F."/>
            <person name="Ohara O."/>
            <person name="Okazaki Y."/>
            <person name="Orlando V."/>
            <person name="Pang K.C."/>
            <person name="Pavan W.J."/>
            <person name="Pavesi G."/>
            <person name="Pesole G."/>
            <person name="Petrovsky N."/>
            <person name="Piazza S."/>
            <person name="Reed J."/>
            <person name="Reid J.F."/>
            <person name="Ring B.Z."/>
            <person name="Ringwald M."/>
            <person name="Rost B."/>
            <person name="Ruan Y."/>
            <person name="Salzberg S.L."/>
            <person name="Sandelin A."/>
            <person name="Schneider C."/>
            <person name="Schoenbach C."/>
            <person name="Sekiguchi K."/>
            <person name="Semple C.A."/>
            <person name="Seno S."/>
            <person name="Sessa L."/>
            <person name="Sheng Y."/>
            <person name="Shibata Y."/>
            <person name="Shimada H."/>
            <person name="Shimada K."/>
            <person name="Silva D."/>
            <person name="Sinclair B."/>
            <person name="Sperling S."/>
            <person name="Stupka E."/>
            <person name="Sugiura K."/>
            <person name="Sultana R."/>
            <person name="Takenaka Y."/>
            <person name="Taki K."/>
            <person name="Tammoja K."/>
            <person name="Tan S.L."/>
            <person name="Tang S."/>
            <person name="Taylor M.S."/>
            <person name="Tegner J."/>
            <person name="Teichmann S.A."/>
            <person name="Ueda H.R."/>
            <person name="van Nimwegen E."/>
            <person name="Verardo R."/>
            <person name="Wei C.L."/>
            <person name="Yagi K."/>
            <person name="Yamanishi H."/>
            <person name="Zabarovsky E."/>
            <person name="Zhu S."/>
            <person name="Zimmer A."/>
            <person name="Hide W."/>
            <person name="Bult C."/>
            <person name="Grimmond S.M."/>
            <person name="Teasdale R.D."/>
            <person name="Liu E.T."/>
            <person name="Brusic V."/>
            <person name="Quackenbush J."/>
            <person name="Wahlestedt C."/>
            <person name="Mattick J.S."/>
            <person name="Hume D.A."/>
            <person name="Kai C."/>
            <person name="Sasaki D."/>
            <person name="Tomaru Y."/>
            <person name="Fukuda S."/>
            <person name="Kanamori-Katayama M."/>
            <person name="Suzuki M."/>
            <person name="Aoki J."/>
            <person name="Arakawa T."/>
            <person name="Iida J."/>
            <person name="Imamura K."/>
            <person name="Itoh M."/>
            <person name="Kato T."/>
            <person name="Kawaji H."/>
            <person name="Kawagashira N."/>
            <person name="Kawashima T."/>
            <person name="Kojima M."/>
            <person name="Kondo S."/>
            <person name="Konno H."/>
            <person name="Nakano K."/>
            <person name="Ninomiya N."/>
            <person name="Nishio T."/>
            <person name="Okada M."/>
            <person name="Plessy C."/>
            <person name="Shibata K."/>
            <person name="Shiraki T."/>
            <person name="Suzuki S."/>
            <person name="Tagami M."/>
            <person name="Waki K."/>
            <person name="Watahiki A."/>
            <person name="Okamura-Oho Y."/>
            <person name="Suzuki H."/>
            <person name="Kawai J."/>
            <person name="Hayashizaki Y."/>
        </authorList>
    </citation>
    <scope>NUCLEOTIDE SEQUENCE [LARGE SCALE MRNA] (ISOFORMS 4 AND 5)</scope>
    <scope>NUCLEOTIDE SEQUENCE [LARGE SCALE MRNA] OF 1094-1256 (ISOFORM 3)</scope>
    <source>
        <strain>C57BL/6J</strain>
        <tissue>Spinal cord</tissue>
    </source>
</reference>
<reference key="4">
    <citation type="submission" date="2007-04" db="UniProtKB">
        <authorList>
            <person name="Lubec G."/>
            <person name="Kang S.U."/>
        </authorList>
    </citation>
    <scope>PROTEIN SEQUENCE OF 432-449 AND 705-723</scope>
    <scope>IDENTIFICATION BY MASS SPECTROMETRY</scope>
    <source>
        <strain>C57BL/6J</strain>
        <tissue>Brain</tissue>
    </source>
</reference>
<reference key="5">
    <citation type="journal article" date="2001" name="J. Cell Biol.">
        <title>Overlapping functions of the cell adhesion molecules Nr-CAM and L1 in cerebellar granule cell development.</title>
        <authorList>
            <person name="Sakurai T."/>
            <person name="Lustig M."/>
            <person name="Babiarz J."/>
            <person name="Furley A.J."/>
            <person name="Tait S."/>
            <person name="Brophy P.J."/>
            <person name="Brown S.A."/>
            <person name="Brown L.Y."/>
            <person name="Mason C.A."/>
            <person name="Grumet M."/>
        </authorList>
    </citation>
    <scope>DISRUPTION PHENOTYPE</scope>
    <scope>FUNCTION</scope>
    <scope>TISSUE SPECIFICITY</scope>
    <scope>SUBUNIT</scope>
</reference>
<reference key="6">
    <citation type="journal article" date="2003" name="J. Neurosci.">
        <title>The role of the ankyrin-binding protein NrCAM in node of Ranvier formation.</title>
        <authorList>
            <person name="Custer A.W."/>
            <person name="Kazarinova-Noyes K."/>
            <person name="Sakurai T."/>
            <person name="Xu X."/>
            <person name="Simon W."/>
            <person name="Grumet M."/>
            <person name="Shrager P."/>
        </authorList>
    </citation>
    <scope>DISRUPTION PHENOTYPE</scope>
    <scope>FUNCTION</scope>
    <scope>TISSUE SPECIFICITY</scope>
    <scope>SUBCELLULAR LOCATION</scope>
</reference>
<reference key="7">
    <citation type="journal article" date="2005" name="Neuron">
        <title>Gliomedin mediates Schwann cell-axon interaction and the molecular assembly of the nodes of Ranvier.</title>
        <authorList>
            <person name="Eshed Y."/>
            <person name="Feinberg K."/>
            <person name="Poliak S."/>
            <person name="Sabanay H."/>
            <person name="Sarig-Nadir O."/>
            <person name="Spiegel I."/>
            <person name="Bermingham J.R. Jr."/>
            <person name="Peles E."/>
        </authorList>
    </citation>
    <scope>FUNCTION</scope>
    <scope>INTERACTION WITH GLDN</scope>
</reference>
<reference key="8">
    <citation type="journal article" date="2010" name="Cell">
        <title>A tissue-specific atlas of mouse protein phosphorylation and expression.</title>
        <authorList>
            <person name="Huttlin E.L."/>
            <person name="Jedrychowski M.P."/>
            <person name="Elias J.E."/>
            <person name="Goswami T."/>
            <person name="Rad R."/>
            <person name="Beausoleil S.A."/>
            <person name="Villen J."/>
            <person name="Haas W."/>
            <person name="Sowa M.E."/>
            <person name="Gygi S.P."/>
        </authorList>
    </citation>
    <scope>PHOSPHORYLATION [LARGE SCALE ANALYSIS] AT THR-1173; TYR-1177; SER-1178; SER-1203; SER-1206; SER-1242; SER-1243 AND SER-1247</scope>
    <scope>IDENTIFICATION BY MASS SPECTROMETRY [LARGE SCALE ANALYSIS]</scope>
    <source>
        <tissue>Brain</tissue>
        <tissue>Lung</tissue>
    </source>
</reference>
<reference key="9">
    <citation type="journal article" date="2010" name="Neuron">
        <title>A glial signal consisting of gliomedin and NrCAM clusters axonal Na+ channels during the formation of nodes of Ranvier.</title>
        <authorList>
            <person name="Feinberg K."/>
            <person name="Eshed-Eisenbach Y."/>
            <person name="Frechter S."/>
            <person name="Amor V."/>
            <person name="Salomon D."/>
            <person name="Sabanay H."/>
            <person name="Dupree J.L."/>
            <person name="Grumet M."/>
            <person name="Brophy P.J."/>
            <person name="Shrager P."/>
            <person name="Peles E."/>
        </authorList>
    </citation>
    <scope>DISRUPTION PHENOTYPE</scope>
    <scope>FUNCTION</scope>
    <scope>SUBCELLULAR LOCATION</scope>
    <scope>SUBUNIT</scope>
    <scope>TISSUE SPECIFICITY</scope>
</reference>
<reference key="10">
    <citation type="journal article" date="2013" name="J. Biol. Chem.">
        <title>Myocilin mediates myelination in the peripheral nervous system through ErbB2/3 signaling.</title>
        <authorList>
            <person name="Kwon H.S."/>
            <person name="Johnson T.V."/>
            <person name="Joe M.K."/>
            <person name="Abu-Asab M."/>
            <person name="Zhang J."/>
            <person name="Chan C.C."/>
            <person name="Tomarev S.I."/>
        </authorList>
    </citation>
    <scope>INTERACTION WITH MYOC</scope>
</reference>
<reference key="11">
    <citation type="journal article" date="2014" name="J. Neurosci.">
        <title>Long-term maintenance of Na+ channels at nodes of Ranvier depends on glial contact mediated by gliomedin and NrCAM.</title>
        <authorList>
            <person name="Amor V."/>
            <person name="Feinberg K."/>
            <person name="Eshed-Eisenbach Y."/>
            <person name="Vainshtein A."/>
            <person name="Frechter S."/>
            <person name="Grumet M."/>
            <person name="Rosenbluth J."/>
            <person name="Peles E."/>
        </authorList>
    </citation>
    <scope>DISRUPTION PHENOTYPE</scope>
    <scope>FUNCTION</scope>
    <scope>TISSUE SPECIFICITY</scope>
    <scope>SUBCELLULAR LOCATION</scope>
</reference>
<organism>
    <name type="scientific">Mus musculus</name>
    <name type="common">Mouse</name>
    <dbReference type="NCBI Taxonomy" id="10090"/>
    <lineage>
        <taxon>Eukaryota</taxon>
        <taxon>Metazoa</taxon>
        <taxon>Chordata</taxon>
        <taxon>Craniata</taxon>
        <taxon>Vertebrata</taxon>
        <taxon>Euteleostomi</taxon>
        <taxon>Mammalia</taxon>
        <taxon>Eutheria</taxon>
        <taxon>Euarchontoglires</taxon>
        <taxon>Glires</taxon>
        <taxon>Rodentia</taxon>
        <taxon>Myomorpha</taxon>
        <taxon>Muroidea</taxon>
        <taxon>Muridae</taxon>
        <taxon>Murinae</taxon>
        <taxon>Mus</taxon>
        <taxon>Mus</taxon>
    </lineage>
</organism>
<protein>
    <recommendedName>
        <fullName>Neuronal cell adhesion molecule</fullName>
        <shortName>Nr-CAM</shortName>
    </recommendedName>
    <alternativeName>
        <fullName>Neuronal surface protein Bravo</fullName>
        <shortName>mBravo</shortName>
    </alternativeName>
    <alternativeName>
        <fullName>NgCAM-related cell adhesion molecule</fullName>
        <shortName>Ng-CAM-related</shortName>
    </alternativeName>
</protein>
<name>NRCAM_MOUSE</name>
<proteinExistence type="evidence at protein level"/>
<evidence type="ECO:0000250" key="1">
    <source>
        <dbReference type="UniProtKB" id="P97686"/>
    </source>
</evidence>
<evidence type="ECO:0000255" key="2"/>
<evidence type="ECO:0000255" key="3">
    <source>
        <dbReference type="PROSITE-ProRule" id="PRU00114"/>
    </source>
</evidence>
<evidence type="ECO:0000255" key="4">
    <source>
        <dbReference type="PROSITE-ProRule" id="PRU00316"/>
    </source>
</evidence>
<evidence type="ECO:0000256" key="5">
    <source>
        <dbReference type="SAM" id="MobiDB-lite"/>
    </source>
</evidence>
<evidence type="ECO:0000269" key="6">
    <source>
    </source>
</evidence>
<evidence type="ECO:0000269" key="7">
    <source>
    </source>
</evidence>
<evidence type="ECO:0000269" key="8">
    <source>
    </source>
</evidence>
<evidence type="ECO:0000269" key="9">
    <source>
    </source>
</evidence>
<evidence type="ECO:0000269" key="10">
    <source>
    </source>
</evidence>
<evidence type="ECO:0000269" key="11">
    <source>
    </source>
</evidence>
<evidence type="ECO:0000303" key="12">
    <source>
    </source>
</evidence>
<evidence type="ECO:0000303" key="13">
    <source>
    </source>
</evidence>
<evidence type="ECO:0000305" key="14"/>
<evidence type="ECO:0000305" key="15">
    <source>
    </source>
</evidence>
<evidence type="ECO:0007744" key="16">
    <source>
    </source>
</evidence>
<accession>Q810U4</accession>
<accession>Q80U33</accession>
<accession>Q8BLG8</accession>
<accession>Q8BX92</accession>
<accession>Q8BYJ8</accession>
<keyword id="KW-0025">Alternative splicing</keyword>
<keyword id="KW-0130">Cell adhesion</keyword>
<keyword id="KW-1003">Cell membrane</keyword>
<keyword id="KW-0966">Cell projection</keyword>
<keyword id="KW-0903">Direct protein sequencing</keyword>
<keyword id="KW-1015">Disulfide bond</keyword>
<keyword id="KW-0325">Glycoprotein</keyword>
<keyword id="KW-0393">Immunoglobulin domain</keyword>
<keyword id="KW-0472">Membrane</keyword>
<keyword id="KW-0597">Phosphoprotein</keyword>
<keyword id="KW-1185">Reference proteome</keyword>
<keyword id="KW-0677">Repeat</keyword>
<keyword id="KW-0964">Secreted</keyword>
<keyword id="KW-0732">Signal</keyword>
<keyword id="KW-0812">Transmembrane</keyword>
<keyword id="KW-1133">Transmembrane helix</keyword>
<gene>
    <name type="primary">Nrcam</name>
    <name type="synonym">Kiaa0343</name>
</gene>
<sequence length="1256" mass="138522">MQLKIMPKKKHLSAGGVPLILFLCQMISALDVPLDLVQPPTITQQSPKDYIIDPRENIVIQCEAKGKPPPSFSWTRNGTHFDIDKDPLVTMKPGSGTLVINIMSEGKAETYEGVYQCTARNERGAAVSNNIVVRPSRSPLWTKERLEPIVLQNGQSLVLPCRPPIGLPPAIIFWMDNSFQRLPQSERVSQGLNGDLYFSNVLPEDTREDYICYARFNHTQTIQQKQPISLKVISVDELNDTIAANLSDTEFYGAKSSKERPPTFLTPEGNESHKEELRGNVLSLECIAEGLPTPIIYWIKEDGMLPANRTFYRNFKKTLQITHVSEADSGNYQCIAKNALGAVHHTISVTVKAAPYWIVAPQNLVLSPGENGTLICRANGNPKPRISWLTNGVPIEIALDDPSRKIDGDTIIFSNVQESSSAVYQCNASNKYGYLLANAFVNVLAEPPRILTSANTLYQVIANRPALLDCAFFGSPMPTIEWFKGTKGSALHEDIYVLHDNGTLEIPVAQKDSTGTYTCVARNKLGMAKNEVHLEIKDPTRIIKQPEYAVVQRGSKVSFECRVKHDHTLIPTIMWLKDNGELPNDERFSTDKDHLVVSDVKDDDGGTYTCTANTTLDSASASAVLRVVAPTPTPAPIYDVPNPPFDLELTNQLDKSVQLTWTPGDDNNSPITKFIIEYEDAMHDAGLWRHQAEVSGTQTTAQLKLSPYVNYSFRVMAENSIGRSMPSEASEQYLTKAAEPDQNPMAVEGLGTEPDNLVITWKPLNGFQSNGPGLQYKVSWRQKDGDDEWTSVVVANVSKYIVSGTPTFVPYLIKVQALNDVGFAPEPAAVMGHSGEDLPMVAPGNVRVSVVNSTLAEVHWDPVPPKSVRGHLQGYRIYYWKTQSSSKRNRRHIEKKILTFQGTKTHGMLPGLQPYSHYALNVRVVNGKGEGPASTDRGFHTPEGVPSAPSSLKIVNPTLDSLTLEWDPPSHPNGILTEYILQYQPINSTHELGPLVDLKIPANKTRWTLKNLNFSTRYKFYFYAQTSVGPGSQITEEAITTVDEAGIPPPDVGAGKGKEEWRKEIVNGSRSFFGLKGLMPGTAYKVRVGAEGDSGFVSSEDVFETGPAMASRQVDIATQGWFIGLMCAVALLILILLIVCFIRRNKGGKYPVKEKEDAHADPEIQPMKEDDGTFGEYSDAEDHKPLKKGSRTPSDRTVKKEDSDDSLVDYGEGVNGQFNEDGSFIGQYSGKKEKEPAEGNESSEAPSPVNAMNSFV</sequence>
<dbReference type="EMBL" id="AJ543321">
    <property type="protein sequence ID" value="CAD65848.1"/>
    <property type="status" value="ALT_INIT"/>
    <property type="molecule type" value="mRNA"/>
</dbReference>
<dbReference type="EMBL" id="AK122252">
    <property type="protein sequence ID" value="BAC65534.1"/>
    <property type="status" value="ALT_INIT"/>
    <property type="molecule type" value="mRNA"/>
</dbReference>
<dbReference type="EMBL" id="AK039322">
    <property type="protein sequence ID" value="BAC30318.1"/>
    <property type="molecule type" value="mRNA"/>
</dbReference>
<dbReference type="EMBL" id="AK048567">
    <property type="protein sequence ID" value="BAC33377.1"/>
    <property type="molecule type" value="mRNA"/>
</dbReference>
<dbReference type="EMBL" id="AK045259">
    <property type="protein sequence ID" value="BAC32284.1"/>
    <property type="molecule type" value="mRNA"/>
</dbReference>
<dbReference type="CCDS" id="CCDS49056.1">
    <molecule id="Q810U4-1"/>
</dbReference>
<dbReference type="CCDS" id="CCDS49057.1">
    <molecule id="Q810U4-2"/>
</dbReference>
<dbReference type="RefSeq" id="NP_001139503.1">
    <molecule id="Q810U4-2"/>
    <property type="nucleotide sequence ID" value="NM_001146031.1"/>
</dbReference>
<dbReference type="RefSeq" id="NP_795904.3">
    <molecule id="Q810U4-1"/>
    <property type="nucleotide sequence ID" value="NM_176930.4"/>
</dbReference>
<dbReference type="SMR" id="Q810U4"/>
<dbReference type="BioGRID" id="235320">
    <property type="interactions" value="15"/>
</dbReference>
<dbReference type="CORUM" id="Q810U4"/>
<dbReference type="FunCoup" id="Q810U4">
    <property type="interactions" value="870"/>
</dbReference>
<dbReference type="IntAct" id="Q810U4">
    <property type="interactions" value="4"/>
</dbReference>
<dbReference type="MINT" id="Q810U4"/>
<dbReference type="STRING" id="10090.ENSMUSP00000020939"/>
<dbReference type="GlyConnect" id="2549">
    <property type="glycosylation" value="30 N-Linked glycans (11 sites)"/>
</dbReference>
<dbReference type="GlyCosmos" id="Q810U4">
    <property type="glycosylation" value="17 sites, 28 glycans"/>
</dbReference>
<dbReference type="GlyGen" id="Q810U4">
    <property type="glycosylation" value="20 sites, 39 N-linked glycans (16 sites), 1 O-linked glycan (1 site)"/>
</dbReference>
<dbReference type="iPTMnet" id="Q810U4"/>
<dbReference type="PhosphoSitePlus" id="Q810U4"/>
<dbReference type="SwissPalm" id="Q810U4"/>
<dbReference type="PaxDb" id="10090-ENSMUSP00000020939"/>
<dbReference type="PeptideAtlas" id="Q810U4"/>
<dbReference type="ProteomicsDB" id="253105">
    <molecule id="Q810U4-1"/>
</dbReference>
<dbReference type="ProteomicsDB" id="253106">
    <molecule id="Q810U4-2"/>
</dbReference>
<dbReference type="ProteomicsDB" id="253107">
    <molecule id="Q810U4-3"/>
</dbReference>
<dbReference type="ProteomicsDB" id="253108">
    <molecule id="Q810U4-4"/>
</dbReference>
<dbReference type="ProteomicsDB" id="253109">
    <molecule id="Q810U4-5"/>
</dbReference>
<dbReference type="ABCD" id="Q810U4">
    <property type="antibodies" value="19 sequenced antibodies"/>
</dbReference>
<dbReference type="Antibodypedia" id="17285">
    <property type="antibodies" value="341 antibodies from 39 providers"/>
</dbReference>
<dbReference type="DNASU" id="319504"/>
<dbReference type="Ensembl" id="ENSMUST00000020939.16">
    <molecule id="Q810U4-1"/>
    <property type="protein sequence ID" value="ENSMUSP00000020939.9"/>
    <property type="gene ID" value="ENSMUSG00000020598.17"/>
</dbReference>
<dbReference type="Ensembl" id="ENSMUST00000110748.4">
    <molecule id="Q810U4-2"/>
    <property type="protein sequence ID" value="ENSMUSP00000106376.3"/>
    <property type="gene ID" value="ENSMUSG00000020598.17"/>
</dbReference>
<dbReference type="GeneID" id="319504"/>
<dbReference type="KEGG" id="mmu:319504"/>
<dbReference type="UCSC" id="uc007nls.2">
    <molecule id="Q810U4-5"/>
    <property type="organism name" value="mouse"/>
</dbReference>
<dbReference type="UCSC" id="uc007nlt.2">
    <molecule id="Q810U4-2"/>
    <property type="organism name" value="mouse"/>
</dbReference>
<dbReference type="UCSC" id="uc007nlu.2">
    <molecule id="Q810U4-1"/>
    <property type="organism name" value="mouse"/>
</dbReference>
<dbReference type="UCSC" id="uc007nlw.1">
    <molecule id="Q810U4-4"/>
    <property type="organism name" value="mouse"/>
</dbReference>
<dbReference type="AGR" id="MGI:104750"/>
<dbReference type="CTD" id="4897"/>
<dbReference type="MGI" id="MGI:104750">
    <property type="gene designation" value="Nrcam"/>
</dbReference>
<dbReference type="VEuPathDB" id="HostDB:ENSMUSG00000020598"/>
<dbReference type="eggNOG" id="KOG3513">
    <property type="taxonomic scope" value="Eukaryota"/>
</dbReference>
<dbReference type="GeneTree" id="ENSGT00940000155419"/>
<dbReference type="HOGENOM" id="CLU_005756_1_1_1"/>
<dbReference type="InParanoid" id="Q810U4"/>
<dbReference type="OMA" id="QTHAMEV"/>
<dbReference type="PhylomeDB" id="Q810U4"/>
<dbReference type="TreeFam" id="TF351098"/>
<dbReference type="BioGRID-ORCS" id="319504">
    <property type="hits" value="2 hits in 77 CRISPR screens"/>
</dbReference>
<dbReference type="CD-CODE" id="CE726F99">
    <property type="entry name" value="Postsynaptic density"/>
</dbReference>
<dbReference type="ChiTaRS" id="Nrcam">
    <property type="organism name" value="mouse"/>
</dbReference>
<dbReference type="PRO" id="PR:Q810U4"/>
<dbReference type="Proteomes" id="UP000000589">
    <property type="component" value="Chromosome 12"/>
</dbReference>
<dbReference type="RNAct" id="Q810U4">
    <property type="molecule type" value="protein"/>
</dbReference>
<dbReference type="Bgee" id="ENSMUSG00000020598">
    <property type="expression patterns" value="Expressed in epithelium of lens and 201 other cell types or tissues"/>
</dbReference>
<dbReference type="ExpressionAtlas" id="Q810U4">
    <property type="expression patterns" value="baseline and differential"/>
</dbReference>
<dbReference type="GO" id="GO:0030424">
    <property type="term" value="C:axon"/>
    <property type="evidence" value="ECO:0000314"/>
    <property type="project" value="MGI"/>
</dbReference>
<dbReference type="GO" id="GO:0005576">
    <property type="term" value="C:extracellular region"/>
    <property type="evidence" value="ECO:0007669"/>
    <property type="project" value="UniProtKB-SubCell"/>
</dbReference>
<dbReference type="GO" id="GO:0098978">
    <property type="term" value="C:glutamatergic synapse"/>
    <property type="evidence" value="ECO:0000314"/>
    <property type="project" value="SynGO"/>
</dbReference>
<dbReference type="GO" id="GO:0005886">
    <property type="term" value="C:plasma membrane"/>
    <property type="evidence" value="ECO:0000314"/>
    <property type="project" value="MGI"/>
</dbReference>
<dbReference type="GO" id="GO:0098839">
    <property type="term" value="C:postsynaptic density membrane"/>
    <property type="evidence" value="ECO:0000314"/>
    <property type="project" value="SynGO"/>
</dbReference>
<dbReference type="GO" id="GO:0045211">
    <property type="term" value="C:postsynaptic membrane"/>
    <property type="evidence" value="ECO:0000314"/>
    <property type="project" value="SynGO"/>
</dbReference>
<dbReference type="GO" id="GO:0045202">
    <property type="term" value="C:synapse"/>
    <property type="evidence" value="ECO:0000314"/>
    <property type="project" value="MGI"/>
</dbReference>
<dbReference type="GO" id="GO:0030506">
    <property type="term" value="F:ankyrin binding"/>
    <property type="evidence" value="ECO:0000250"/>
    <property type="project" value="UniProtKB"/>
</dbReference>
<dbReference type="GO" id="GO:0086080">
    <property type="term" value="F:protein binding involved in heterotypic cell-cell adhesion"/>
    <property type="evidence" value="ECO:0000316"/>
    <property type="project" value="MGI"/>
</dbReference>
<dbReference type="GO" id="GO:0001525">
    <property type="term" value="P:angiogenesis"/>
    <property type="evidence" value="ECO:0007669"/>
    <property type="project" value="Ensembl"/>
</dbReference>
<dbReference type="GO" id="GO:0007411">
    <property type="term" value="P:axon guidance"/>
    <property type="evidence" value="ECO:0000314"/>
    <property type="project" value="UniProtKB"/>
</dbReference>
<dbReference type="GO" id="GO:0098609">
    <property type="term" value="P:cell-cell adhesion"/>
    <property type="evidence" value="ECO:0000314"/>
    <property type="project" value="UniProtKB"/>
</dbReference>
<dbReference type="GO" id="GO:0007417">
    <property type="term" value="P:central nervous system development"/>
    <property type="evidence" value="ECO:0000314"/>
    <property type="project" value="UniProtKB"/>
</dbReference>
<dbReference type="GO" id="GO:0045162">
    <property type="term" value="P:clustering of voltage-gated sodium channels"/>
    <property type="evidence" value="ECO:0000315"/>
    <property type="project" value="MGI"/>
</dbReference>
<dbReference type="GO" id="GO:0019227">
    <property type="term" value="P:neuronal action potential propagation"/>
    <property type="evidence" value="ECO:0000315"/>
    <property type="project" value="MGI"/>
</dbReference>
<dbReference type="GO" id="GO:0008104">
    <property type="term" value="P:protein localization"/>
    <property type="evidence" value="ECO:0000314"/>
    <property type="project" value="MGI"/>
</dbReference>
<dbReference type="GO" id="GO:0010975">
    <property type="term" value="P:regulation of neuron projection development"/>
    <property type="evidence" value="ECO:0000315"/>
    <property type="project" value="MGI"/>
</dbReference>
<dbReference type="GO" id="GO:0099175">
    <property type="term" value="P:regulation of postsynapse organization"/>
    <property type="evidence" value="ECO:0000314"/>
    <property type="project" value="SynGO"/>
</dbReference>
<dbReference type="GO" id="GO:0031290">
    <property type="term" value="P:retinal ganglion cell axon guidance"/>
    <property type="evidence" value="ECO:0000315"/>
    <property type="project" value="MGI"/>
</dbReference>
<dbReference type="CDD" id="cd00063">
    <property type="entry name" value="FN3"/>
    <property type="match status" value="4"/>
</dbReference>
<dbReference type="CDD" id="cd05874">
    <property type="entry name" value="IgI_NrCAM"/>
    <property type="match status" value="1"/>
</dbReference>
<dbReference type="FunFam" id="2.60.40.10:FF:000057">
    <property type="entry name" value="neural cell adhesion molecule L1"/>
    <property type="match status" value="1"/>
</dbReference>
<dbReference type="FunFam" id="2.60.40.10:FF:000363">
    <property type="entry name" value="neurofascin isoform X1"/>
    <property type="match status" value="1"/>
</dbReference>
<dbReference type="FunFam" id="2.60.40.10:FF:000512">
    <property type="entry name" value="neurofascin isoform X1"/>
    <property type="match status" value="1"/>
</dbReference>
<dbReference type="FunFam" id="2.60.40.10:FF:000005">
    <property type="entry name" value="Neuronal cell adhesion molecule"/>
    <property type="match status" value="1"/>
</dbReference>
<dbReference type="FunFam" id="2.60.40.10:FF:000038">
    <property type="entry name" value="Neuronal cell adhesion molecule"/>
    <property type="match status" value="1"/>
</dbReference>
<dbReference type="FunFam" id="2.60.40.10:FF:000078">
    <property type="entry name" value="Neuronal cell adhesion molecule"/>
    <property type="match status" value="1"/>
</dbReference>
<dbReference type="FunFam" id="2.60.40.10:FF:000114">
    <property type="entry name" value="Neuronal cell adhesion molecule"/>
    <property type="match status" value="1"/>
</dbReference>
<dbReference type="FunFam" id="2.60.40.10:FF:000347">
    <property type="entry name" value="Neuronal cell adhesion molecule"/>
    <property type="match status" value="1"/>
</dbReference>
<dbReference type="FunFam" id="2.60.40.10:FF:000100">
    <property type="entry name" value="Neuronal cell adhesion molecule a"/>
    <property type="match status" value="1"/>
</dbReference>
<dbReference type="FunFam" id="2.60.40.10:FF:000332">
    <property type="entry name" value="neuronal cell adhesion molecule isoform X2"/>
    <property type="match status" value="1"/>
</dbReference>
<dbReference type="Gene3D" id="2.60.40.10">
    <property type="entry name" value="Immunoglobulins"/>
    <property type="match status" value="10"/>
</dbReference>
<dbReference type="InterPro" id="IPR003961">
    <property type="entry name" value="FN3_dom"/>
</dbReference>
<dbReference type="InterPro" id="IPR036116">
    <property type="entry name" value="FN3_sf"/>
</dbReference>
<dbReference type="InterPro" id="IPR007110">
    <property type="entry name" value="Ig-like_dom"/>
</dbReference>
<dbReference type="InterPro" id="IPR036179">
    <property type="entry name" value="Ig-like_dom_sf"/>
</dbReference>
<dbReference type="InterPro" id="IPR013783">
    <property type="entry name" value="Ig-like_fold"/>
</dbReference>
<dbReference type="InterPro" id="IPR003006">
    <property type="entry name" value="Ig/MHC_CS"/>
</dbReference>
<dbReference type="InterPro" id="IPR013098">
    <property type="entry name" value="Ig_I-set"/>
</dbReference>
<dbReference type="InterPro" id="IPR003599">
    <property type="entry name" value="Ig_sub"/>
</dbReference>
<dbReference type="InterPro" id="IPR003598">
    <property type="entry name" value="Ig_sub2"/>
</dbReference>
<dbReference type="InterPro" id="IPR051170">
    <property type="entry name" value="Neural/epithelial_adhesion"/>
</dbReference>
<dbReference type="InterPro" id="IPR026966">
    <property type="entry name" value="Neurofascin/L1/NrCAM_C"/>
</dbReference>
<dbReference type="PANTHER" id="PTHR12231">
    <property type="entry name" value="CTX-RELATED TYPE I TRANSMEMBRANE PROTEIN"/>
    <property type="match status" value="1"/>
</dbReference>
<dbReference type="PANTHER" id="PTHR12231:SF257">
    <property type="entry name" value="NEURAL CELL ADHESION MOLECULE L1-LIKE PROTEIN"/>
    <property type="match status" value="1"/>
</dbReference>
<dbReference type="Pfam" id="PF13882">
    <property type="entry name" value="Bravo_FIGEY"/>
    <property type="match status" value="1"/>
</dbReference>
<dbReference type="Pfam" id="PF00041">
    <property type="entry name" value="fn3"/>
    <property type="match status" value="4"/>
</dbReference>
<dbReference type="Pfam" id="PF07679">
    <property type="entry name" value="I-set"/>
    <property type="match status" value="3"/>
</dbReference>
<dbReference type="Pfam" id="PF13927">
    <property type="entry name" value="Ig_3"/>
    <property type="match status" value="2"/>
</dbReference>
<dbReference type="SMART" id="SM00060">
    <property type="entry name" value="FN3"/>
    <property type="match status" value="4"/>
</dbReference>
<dbReference type="SMART" id="SM00409">
    <property type="entry name" value="IG"/>
    <property type="match status" value="6"/>
</dbReference>
<dbReference type="SMART" id="SM00408">
    <property type="entry name" value="IGc2"/>
    <property type="match status" value="6"/>
</dbReference>
<dbReference type="SUPFAM" id="SSF49265">
    <property type="entry name" value="Fibronectin type III"/>
    <property type="match status" value="2"/>
</dbReference>
<dbReference type="SUPFAM" id="SSF48726">
    <property type="entry name" value="Immunoglobulin"/>
    <property type="match status" value="6"/>
</dbReference>
<dbReference type="PROSITE" id="PS50853">
    <property type="entry name" value="FN3"/>
    <property type="match status" value="4"/>
</dbReference>
<dbReference type="PROSITE" id="PS50835">
    <property type="entry name" value="IG_LIKE"/>
    <property type="match status" value="6"/>
</dbReference>
<dbReference type="PROSITE" id="PS00290">
    <property type="entry name" value="IG_MHC"/>
    <property type="match status" value="1"/>
</dbReference>
<comment type="function">
    <text evidence="6 7 8 9 11">Cell adhesion protein that is required for normal responses to cell-cell contacts in brain and in the peripheral nervous system. Plays a role in neurite outgrowth in response to contactin binding (PubMed:11564762). Plays a role in mediating cell-cell contacts between Schwann cells and axons (PubMed:20188654). Plays a role in the formation and maintenance of the nodes of Ranvier on myelinated axons. Nodes of Ranvier contain clustered sodium channels that are crucial for the saltatory propagation of action potentials along myelinated axons. During development, nodes of Ranvier are formed by the fusion of two heminodes. Required for normal clustering of sodium channels at heminodes; not required for the formation of mature nodes with normal sodium channel clusters (PubMed:14602817, PubMed:20188654). Required, together with GLDN, for maintaining NFASC and sodium channel clusters at mature nodes of Ranvier (PubMed:24719088).</text>
</comment>
<comment type="subunit">
    <text evidence="6 8 10 15">Constituent of a NFASC/NRCAM/ankyrin-G complex (Probable). Detected in a complex with CNTN1 and PTPRB (PubMed:11564762). Interacts with GLDN/gliomedin and MYOC (PubMed:16039564, PubMed:23897819).</text>
</comment>
<comment type="interaction">
    <interactant intactId="EBI-8321816">
        <id>Q810U4</id>
    </interactant>
    <interactant intactId="EBI-514290">
        <id>Q811D0</id>
        <label>Dlg1</label>
    </interactant>
    <organismsDiffer>false</organismsDiffer>
    <experiments>6</experiments>
</comment>
<comment type="interaction">
    <interactant intactId="EBI-8321816">
        <id>Q810U4</id>
    </interactant>
    <interactant intactId="EBI-300895">
        <id>Q62108</id>
        <label>Dlg4</label>
    </interactant>
    <organismsDiffer>false</organismsDiffer>
    <experiments>2</experiments>
</comment>
<comment type="subcellular location">
    <subcellularLocation>
        <location evidence="9">Cell membrane</location>
        <topology evidence="14">Single-pass type I membrane protein</topology>
    </subcellularLocation>
    <subcellularLocation>
        <location evidence="7">Cell projection</location>
        <location evidence="7">Axon</location>
    </subcellularLocation>
    <subcellularLocation>
        <location evidence="9">Secreted</location>
    </subcellularLocation>
    <text evidence="7 9 11">Detected at nodes of Ranvier (PubMed:14602817, PubMed:20188654, PubMed:24719088).</text>
</comment>
<comment type="alternative products">
    <event type="alternative splicing"/>
    <isoform>
        <id>Q810U4-1</id>
        <name>1</name>
        <sequence type="displayed"/>
    </isoform>
    <isoform>
        <id>Q810U4-2</id>
        <name>2</name>
        <sequence type="described" ref="VSP_008926 VSP_008927"/>
    </isoform>
    <isoform>
        <id>Q810U4-3</id>
        <name>3</name>
        <sequence type="described" ref="VSP_008930"/>
    </isoform>
    <isoform>
        <id>Q810U4-4</id>
        <name>4</name>
        <sequence type="described" ref="VSP_008923 VSP_008925"/>
    </isoform>
    <isoform>
        <id>Q810U4-5</id>
        <name>5</name>
        <sequence type="described" ref="VSP_008921 VSP_008922 VSP_008924"/>
    </isoform>
</comment>
<comment type="tissue specificity">
    <text evidence="6 7 9 11">Detected in sciatic nerve (PubMed:14602817, PubMed:20188654, PubMed:24719088). Detected in brain, especially in the cerebellum Purkinje cell layer, inner granule cell layer and molecular layer (at protein level) (PubMed:11564762). Detected in neurons and Schwann cells (PubMed:20188654).</text>
</comment>
<comment type="disruption phenotype">
    <text evidence="6 11">Mice are born at the expected Mendelian rate, are viable and fertile. They present no obvious phenotype excepting subtle size differences of cerebellar lobes IV and V. Contrary to wild-type, cerebellar cells do not form neurites when plated on a surface coated with contactin (in vitro) (PubMed:11564762). Neonates present delayed formation of sodium channel clusters at developing nodes of Ranvier, but are indistiguishable from wild-type at 10 days after birth (PubMed:14602817, PubMed:20188654). Mice lacking both Gldn and Nrcam are born at the expected Mendelian rate, but are smaller than control littermates and display important neurological impairments, in spite of seemingly normal nerve myelination. Motor abnormalities vary between individuals, ranging from ataxia, uncoordinated movements and premature death to weakness of the hind limbs, hypomotility, strongly impaired ability to hang from a horizontal bar with their forelimbs and a tendency to stumble. The motor defects correlate with decreased velocity of nerve conduction and slower propagation of action potentials. Most mice die within 60 days after birth, and none are fertile. Mutant mice display delayed formation of mature nodes of Ranvier; 15 days after birth about 20% of the nodes lack detectable sodium channel clusters. Sodium channel clustering and nerve conduction appear normal 60 and 75 days after birth, but subsequently a gradual disintegration of the nodal protein complexes is seen. About 70% of the mutant nodes present high-density sodium channel clustering at 120 days after birth, as opposed to nearly 100% for wild-type. Contrary to wild-type, in adult nodes of Ranvier the sodium channels are often clustered near the paranode border with an empty gap in the middle. At nodes of Ranvier, Schwann cell microvilli are sparse or absent and show defects in their orientation, resulting in various structural abnormalities at the node and the paranode border (PubMed:24719088).</text>
</comment>
<comment type="similarity">
    <text evidence="14">Belongs to the immunoglobulin superfamily. L1/neurofascin/NgCAM family.</text>
</comment>
<comment type="sequence caution" evidence="14">
    <conflict type="erroneous initiation">
        <sequence resource="EMBL-CDS" id="BAC65534"/>
    </conflict>
</comment>
<comment type="sequence caution" evidence="14">
    <conflict type="erroneous initiation">
        <sequence resource="EMBL-CDS" id="CAD65848"/>
    </conflict>
</comment>